<evidence type="ECO:0000250" key="1"/>
<evidence type="ECO:0000305" key="2"/>
<gene>
    <name type="ordered locus">Mlg_1172</name>
</gene>
<dbReference type="EC" id="4.1.3.17"/>
<dbReference type="EC" id="4.1.1.112"/>
<dbReference type="EMBL" id="CP000453">
    <property type="protein sequence ID" value="ABI56521.1"/>
    <property type="molecule type" value="Genomic_DNA"/>
</dbReference>
<dbReference type="RefSeq" id="WP_011628916.1">
    <property type="nucleotide sequence ID" value="NC_008340.1"/>
</dbReference>
<dbReference type="SMR" id="Q0A9G6"/>
<dbReference type="KEGG" id="aeh:Mlg_1172"/>
<dbReference type="eggNOG" id="COG0684">
    <property type="taxonomic scope" value="Bacteria"/>
</dbReference>
<dbReference type="HOGENOM" id="CLU_072626_4_0_6"/>
<dbReference type="OrthoDB" id="943692at2"/>
<dbReference type="Proteomes" id="UP000001962">
    <property type="component" value="Chromosome"/>
</dbReference>
<dbReference type="GO" id="GO:0047443">
    <property type="term" value="F:4-hydroxy-4-methyl-2-oxoglutarate aldolase activity"/>
    <property type="evidence" value="ECO:0007669"/>
    <property type="project" value="UniProtKB-EC"/>
</dbReference>
<dbReference type="GO" id="GO:0046872">
    <property type="term" value="F:metal ion binding"/>
    <property type="evidence" value="ECO:0007669"/>
    <property type="project" value="UniProtKB-KW"/>
</dbReference>
<dbReference type="GO" id="GO:0008948">
    <property type="term" value="F:oxaloacetate decarboxylase activity"/>
    <property type="evidence" value="ECO:0007669"/>
    <property type="project" value="UniProtKB-EC"/>
</dbReference>
<dbReference type="GO" id="GO:0008428">
    <property type="term" value="F:ribonuclease inhibitor activity"/>
    <property type="evidence" value="ECO:0007669"/>
    <property type="project" value="InterPro"/>
</dbReference>
<dbReference type="GO" id="GO:0051252">
    <property type="term" value="P:regulation of RNA metabolic process"/>
    <property type="evidence" value="ECO:0007669"/>
    <property type="project" value="InterPro"/>
</dbReference>
<dbReference type="CDD" id="cd16841">
    <property type="entry name" value="RraA_family"/>
    <property type="match status" value="1"/>
</dbReference>
<dbReference type="Gene3D" id="3.50.30.40">
    <property type="entry name" value="Ribonuclease E inhibitor RraA/RraA-like"/>
    <property type="match status" value="1"/>
</dbReference>
<dbReference type="InterPro" id="IPR010203">
    <property type="entry name" value="RraA"/>
</dbReference>
<dbReference type="InterPro" id="IPR005493">
    <property type="entry name" value="RraA/RraA-like"/>
</dbReference>
<dbReference type="InterPro" id="IPR036704">
    <property type="entry name" value="RraA/RraA-like_sf"/>
</dbReference>
<dbReference type="NCBIfam" id="TIGR01935">
    <property type="entry name" value="NOT-MenG"/>
    <property type="match status" value="1"/>
</dbReference>
<dbReference type="NCBIfam" id="NF006875">
    <property type="entry name" value="PRK09372.1"/>
    <property type="match status" value="1"/>
</dbReference>
<dbReference type="PANTHER" id="PTHR33254">
    <property type="entry name" value="4-HYDROXY-4-METHYL-2-OXOGLUTARATE ALDOLASE 3-RELATED"/>
    <property type="match status" value="1"/>
</dbReference>
<dbReference type="PANTHER" id="PTHR33254:SF4">
    <property type="entry name" value="4-HYDROXY-4-METHYL-2-OXOGLUTARATE ALDOLASE 3-RELATED"/>
    <property type="match status" value="1"/>
</dbReference>
<dbReference type="Pfam" id="PF03737">
    <property type="entry name" value="RraA-like"/>
    <property type="match status" value="1"/>
</dbReference>
<dbReference type="SUPFAM" id="SSF89562">
    <property type="entry name" value="RraA-like"/>
    <property type="match status" value="1"/>
</dbReference>
<organism>
    <name type="scientific">Alkalilimnicola ehrlichii (strain ATCC BAA-1101 / DSM 17681 / MLHE-1)</name>
    <dbReference type="NCBI Taxonomy" id="187272"/>
    <lineage>
        <taxon>Bacteria</taxon>
        <taxon>Pseudomonadati</taxon>
        <taxon>Pseudomonadota</taxon>
        <taxon>Gammaproteobacteria</taxon>
        <taxon>Chromatiales</taxon>
        <taxon>Ectothiorhodospiraceae</taxon>
        <taxon>Alkalilimnicola</taxon>
    </lineage>
</organism>
<keyword id="KW-0456">Lyase</keyword>
<keyword id="KW-0479">Metal-binding</keyword>
<keyword id="KW-1185">Reference proteome</keyword>
<feature type="chain" id="PRO_1000013823" description="Putative 4-hydroxy-4-methyl-2-oxoglutarate aldolase">
    <location>
        <begin position="1"/>
        <end position="161"/>
    </location>
</feature>
<feature type="binding site" evidence="1">
    <location>
        <begin position="75"/>
        <end position="78"/>
    </location>
    <ligand>
        <name>substrate</name>
    </ligand>
</feature>
<feature type="binding site" evidence="1">
    <location>
        <position position="97"/>
    </location>
    <ligand>
        <name>substrate</name>
    </ligand>
</feature>
<feature type="binding site" evidence="1">
    <location>
        <position position="98"/>
    </location>
    <ligand>
        <name>a divalent metal cation</name>
        <dbReference type="ChEBI" id="CHEBI:60240"/>
    </ligand>
</feature>
<comment type="function">
    <text evidence="1">Catalyzes the aldol cleavage of 4-hydroxy-4-methyl-2-oxoglutarate (HMG) into 2 molecules of pyruvate. Also contains a secondary oxaloacetate (OAA) decarboxylase activity due to the common pyruvate enolate transition state formed following C-C bond cleavage in the retro-aldol and decarboxylation reactions (By similarity).</text>
</comment>
<comment type="catalytic activity">
    <reaction>
        <text>4-hydroxy-4-methyl-2-oxoglutarate = 2 pyruvate</text>
        <dbReference type="Rhea" id="RHEA:22748"/>
        <dbReference type="ChEBI" id="CHEBI:15361"/>
        <dbReference type="ChEBI" id="CHEBI:58276"/>
        <dbReference type="EC" id="4.1.3.17"/>
    </reaction>
</comment>
<comment type="catalytic activity">
    <reaction>
        <text>oxaloacetate + H(+) = pyruvate + CO2</text>
        <dbReference type="Rhea" id="RHEA:15641"/>
        <dbReference type="ChEBI" id="CHEBI:15361"/>
        <dbReference type="ChEBI" id="CHEBI:15378"/>
        <dbReference type="ChEBI" id="CHEBI:16452"/>
        <dbReference type="ChEBI" id="CHEBI:16526"/>
        <dbReference type="EC" id="4.1.1.112"/>
    </reaction>
</comment>
<comment type="cofactor">
    <cofactor evidence="1">
        <name>a divalent metal cation</name>
        <dbReference type="ChEBI" id="CHEBI:60240"/>
    </cofactor>
    <text evidence="1">Divalent metal cation.</text>
</comment>
<comment type="subunit">
    <text evidence="1">Homotrimer.</text>
</comment>
<comment type="similarity">
    <text evidence="2">Belongs to the class II aldolase/RraA-like family.</text>
</comment>
<reference key="1">
    <citation type="submission" date="2006-08" db="EMBL/GenBank/DDBJ databases">
        <title>Complete sequence of Alkalilimnicola ehrilichei MLHE-1.</title>
        <authorList>
            <person name="Copeland A."/>
            <person name="Lucas S."/>
            <person name="Lapidus A."/>
            <person name="Barry K."/>
            <person name="Detter J.C."/>
            <person name="Glavina del Rio T."/>
            <person name="Hammon N."/>
            <person name="Israni S."/>
            <person name="Dalin E."/>
            <person name="Tice H."/>
            <person name="Pitluck S."/>
            <person name="Sims D."/>
            <person name="Brettin T."/>
            <person name="Bruce D."/>
            <person name="Han C."/>
            <person name="Tapia R."/>
            <person name="Gilna P."/>
            <person name="Schmutz J."/>
            <person name="Larimer F."/>
            <person name="Land M."/>
            <person name="Hauser L."/>
            <person name="Kyrpides N."/>
            <person name="Mikhailova N."/>
            <person name="Oremland R.S."/>
            <person name="Hoeft S.E."/>
            <person name="Switzer-Blum J."/>
            <person name="Kulp T."/>
            <person name="King G."/>
            <person name="Tabita R."/>
            <person name="Witte B."/>
            <person name="Santini J.M."/>
            <person name="Basu P."/>
            <person name="Hollibaugh J.T."/>
            <person name="Xie G."/>
            <person name="Stolz J.F."/>
            <person name="Richardson P."/>
        </authorList>
    </citation>
    <scope>NUCLEOTIDE SEQUENCE [LARGE SCALE GENOMIC DNA]</scope>
    <source>
        <strain>ATCC BAA-1101 / DSM 17681 / MLHE-1</strain>
    </source>
</reference>
<sequence>MSVPTTDLCDDFADELRVMNPMFRDFGGRVRFHGPVTTVKLFEDNSAVREALSEPGEGRVLVVDGGGSMRCALLGDNLAALGQKNGWAGVVVYGCVRDSAELATIDLGVKALNVHPLKSVKKGIGERDVTVTFAGITIQAGDWLYADEDGIVVARNSLVQA</sequence>
<accession>Q0A9G6</accession>
<name>RRAAH_ALKEH</name>
<proteinExistence type="inferred from homology"/>
<protein>
    <recommendedName>
        <fullName>Putative 4-hydroxy-4-methyl-2-oxoglutarate aldolase</fullName>
        <shortName>HMG aldolase</shortName>
        <ecNumber>4.1.3.17</ecNumber>
    </recommendedName>
    <alternativeName>
        <fullName>Oxaloacetate decarboxylase</fullName>
        <shortName>OAA decarboxylase</shortName>
        <ecNumber>4.1.1.112</ecNumber>
    </alternativeName>
    <alternativeName>
        <fullName>Regulator of ribonuclease activity homolog</fullName>
    </alternativeName>
    <alternativeName>
        <fullName>RraA-like protein</fullName>
    </alternativeName>
</protein>